<gene>
    <name type="primary">rac-2</name>
    <name type="ORF">K03D3.10</name>
</gene>
<evidence type="ECO:0000250" key="1"/>
<evidence type="ECO:0000255" key="2"/>
<evidence type="ECO:0000256" key="3">
    <source>
        <dbReference type="SAM" id="MobiDB-lite"/>
    </source>
</evidence>
<evidence type="ECO:0000269" key="4">
    <source>
    </source>
</evidence>
<evidence type="ECO:0000305" key="5"/>
<proteinExistence type="inferred from homology"/>
<organism>
    <name type="scientific">Caenorhabditis elegans</name>
    <dbReference type="NCBI Taxonomy" id="6239"/>
    <lineage>
        <taxon>Eukaryota</taxon>
        <taxon>Metazoa</taxon>
        <taxon>Ecdysozoa</taxon>
        <taxon>Nematoda</taxon>
        <taxon>Chromadorea</taxon>
        <taxon>Rhabditida</taxon>
        <taxon>Rhabditina</taxon>
        <taxon>Rhabditomorpha</taxon>
        <taxon>Rhabditoidea</taxon>
        <taxon>Rhabditidae</taxon>
        <taxon>Peloderinae</taxon>
        <taxon>Caenorhabditis</taxon>
    </lineage>
</organism>
<dbReference type="EMBL" id="U55018">
    <property type="protein sequence ID" value="AAB40386.1"/>
    <property type="molecule type" value="Genomic_DNA"/>
</dbReference>
<dbReference type="EMBL" id="Z82276">
    <property type="protein sequence ID" value="CAB05247.2"/>
    <property type="molecule type" value="Genomic_DNA"/>
</dbReference>
<dbReference type="PIR" id="JC5328">
    <property type="entry name" value="JC5328"/>
</dbReference>
<dbReference type="PIR" id="T23283">
    <property type="entry name" value="T23283"/>
</dbReference>
<dbReference type="RefSeq" id="NP_001040961.1">
    <property type="nucleotide sequence ID" value="NM_001047496.1"/>
</dbReference>
<dbReference type="SMR" id="Q94124"/>
<dbReference type="BioGRID" id="51651">
    <property type="interactions" value="16"/>
</dbReference>
<dbReference type="FunCoup" id="Q94124">
    <property type="interactions" value="1716"/>
</dbReference>
<dbReference type="STRING" id="6239.K03D3.10.1"/>
<dbReference type="PaxDb" id="6239-K03D3.10"/>
<dbReference type="PeptideAtlas" id="Q94124"/>
<dbReference type="EnsemblMetazoa" id="K03D3.10.1">
    <property type="protein sequence ID" value="K03D3.10.1"/>
    <property type="gene ID" value="WBGene00004287"/>
</dbReference>
<dbReference type="GeneID" id="186939"/>
<dbReference type="KEGG" id="cel:CELE_K03D3.10"/>
<dbReference type="UCSC" id="K03D3.10">
    <property type="organism name" value="c. elegans"/>
</dbReference>
<dbReference type="AGR" id="WB:WBGene00004287"/>
<dbReference type="CTD" id="186939"/>
<dbReference type="WormBase" id="K03D3.10">
    <property type="protein sequence ID" value="CE25698"/>
    <property type="gene ID" value="WBGene00004287"/>
    <property type="gene designation" value="rac-2"/>
</dbReference>
<dbReference type="eggNOG" id="KOG0393">
    <property type="taxonomic scope" value="Eukaryota"/>
</dbReference>
<dbReference type="GeneTree" id="ENSGT00940000153500"/>
<dbReference type="HOGENOM" id="CLU_041217_21_3_1"/>
<dbReference type="InParanoid" id="Q94124"/>
<dbReference type="OMA" id="KCVIINV"/>
<dbReference type="OrthoDB" id="8830751at2759"/>
<dbReference type="PhylomeDB" id="Q94124"/>
<dbReference type="Reactome" id="R-CEL-114604">
    <property type="pathway name" value="GPVI-mediated activation cascade"/>
</dbReference>
<dbReference type="Reactome" id="R-CEL-1257604">
    <property type="pathway name" value="PIP3 activates AKT signaling"/>
</dbReference>
<dbReference type="Reactome" id="R-CEL-4086400">
    <property type="pathway name" value="PCP/CE pathway"/>
</dbReference>
<dbReference type="Reactome" id="R-CEL-6798695">
    <property type="pathway name" value="Neutrophil degranulation"/>
</dbReference>
<dbReference type="Reactome" id="R-CEL-6811558">
    <property type="pathway name" value="PI5P, PP2A and IER3 Regulate PI3K/AKT Signaling"/>
</dbReference>
<dbReference type="Reactome" id="R-CEL-9013404">
    <property type="pathway name" value="RAC2 GTPase cycle"/>
</dbReference>
<dbReference type="Reactome" id="R-CEL-9013407">
    <property type="pathway name" value="RHOH GTPase cycle"/>
</dbReference>
<dbReference type="Reactome" id="R-CEL-9013408">
    <property type="pathway name" value="RHOG GTPase cycle"/>
</dbReference>
<dbReference type="PRO" id="PR:Q94124"/>
<dbReference type="Proteomes" id="UP000001940">
    <property type="component" value="Chromosome IV"/>
</dbReference>
<dbReference type="Bgee" id="WBGene00004287">
    <property type="expression patterns" value="Expressed in embryo"/>
</dbReference>
<dbReference type="GO" id="GO:0030424">
    <property type="term" value="C:axon"/>
    <property type="evidence" value="ECO:0000314"/>
    <property type="project" value="WormBase"/>
</dbReference>
<dbReference type="GO" id="GO:0042995">
    <property type="term" value="C:cell projection"/>
    <property type="evidence" value="ECO:0000318"/>
    <property type="project" value="GO_Central"/>
</dbReference>
<dbReference type="GO" id="GO:0031410">
    <property type="term" value="C:cytoplasmic vesicle"/>
    <property type="evidence" value="ECO:0000318"/>
    <property type="project" value="GO_Central"/>
</dbReference>
<dbReference type="GO" id="GO:0005856">
    <property type="term" value="C:cytoskeleton"/>
    <property type="evidence" value="ECO:0000318"/>
    <property type="project" value="GO_Central"/>
</dbReference>
<dbReference type="GO" id="GO:0005886">
    <property type="term" value="C:plasma membrane"/>
    <property type="evidence" value="ECO:0000314"/>
    <property type="project" value="WormBase"/>
</dbReference>
<dbReference type="GO" id="GO:0005525">
    <property type="term" value="F:GTP binding"/>
    <property type="evidence" value="ECO:0000314"/>
    <property type="project" value="WormBase"/>
</dbReference>
<dbReference type="GO" id="GO:0003924">
    <property type="term" value="F:GTPase activity"/>
    <property type="evidence" value="ECO:0000314"/>
    <property type="project" value="WormBase"/>
</dbReference>
<dbReference type="GO" id="GO:0019901">
    <property type="term" value="F:protein kinase binding"/>
    <property type="evidence" value="ECO:0000318"/>
    <property type="project" value="GO_Central"/>
</dbReference>
<dbReference type="GO" id="GO:0007015">
    <property type="term" value="P:actin filament organization"/>
    <property type="evidence" value="ECO:0000316"/>
    <property type="project" value="UniProtKB"/>
</dbReference>
<dbReference type="GO" id="GO:0048846">
    <property type="term" value="P:axon extension involved in axon guidance"/>
    <property type="evidence" value="ECO:0000316"/>
    <property type="project" value="WormBase"/>
</dbReference>
<dbReference type="GO" id="GO:0060326">
    <property type="term" value="P:cell chemotaxis"/>
    <property type="evidence" value="ECO:0000318"/>
    <property type="project" value="GO_Central"/>
</dbReference>
<dbReference type="GO" id="GO:0030031">
    <property type="term" value="P:cell projection assembly"/>
    <property type="evidence" value="ECO:0000318"/>
    <property type="project" value="GO_Central"/>
</dbReference>
<dbReference type="GO" id="GO:0030865">
    <property type="term" value="P:cortical cytoskeleton organization"/>
    <property type="evidence" value="ECO:0000318"/>
    <property type="project" value="GO_Central"/>
</dbReference>
<dbReference type="GO" id="GO:0033563">
    <property type="term" value="P:dorsal/ventral axon guidance"/>
    <property type="evidence" value="ECO:0000316"/>
    <property type="project" value="WormBase"/>
</dbReference>
<dbReference type="GO" id="GO:0007163">
    <property type="term" value="P:establishment or maintenance of cell polarity"/>
    <property type="evidence" value="ECO:0000318"/>
    <property type="project" value="GO_Central"/>
</dbReference>
<dbReference type="GO" id="GO:0008045">
    <property type="term" value="P:motor neuron axon guidance"/>
    <property type="evidence" value="ECO:0000316"/>
    <property type="project" value="WormBase"/>
</dbReference>
<dbReference type="GO" id="GO:0001764">
    <property type="term" value="P:neuron migration"/>
    <property type="evidence" value="ECO:0000316"/>
    <property type="project" value="WormBase"/>
</dbReference>
<dbReference type="GO" id="GO:0048812">
    <property type="term" value="P:neuron projection morphogenesis"/>
    <property type="evidence" value="ECO:0000316"/>
    <property type="project" value="WormBase"/>
</dbReference>
<dbReference type="GO" id="GO:0016601">
    <property type="term" value="P:Rac protein signal transduction"/>
    <property type="evidence" value="ECO:0000318"/>
    <property type="project" value="GO_Central"/>
</dbReference>
<dbReference type="GO" id="GO:0032956">
    <property type="term" value="P:regulation of actin cytoskeleton organization"/>
    <property type="evidence" value="ECO:0000318"/>
    <property type="project" value="GO_Central"/>
</dbReference>
<dbReference type="GO" id="GO:0008360">
    <property type="term" value="P:regulation of cell shape"/>
    <property type="evidence" value="ECO:0000318"/>
    <property type="project" value="GO_Central"/>
</dbReference>
<dbReference type="CDD" id="cd01871">
    <property type="entry name" value="Rac1_like"/>
    <property type="match status" value="1"/>
</dbReference>
<dbReference type="FunFam" id="3.40.50.300:FF:000088">
    <property type="entry name" value="Ras-related C3 botulinum toxin substrate 1"/>
    <property type="match status" value="1"/>
</dbReference>
<dbReference type="Gene3D" id="3.40.50.300">
    <property type="entry name" value="P-loop containing nucleotide triphosphate hydrolases"/>
    <property type="match status" value="1"/>
</dbReference>
<dbReference type="InterPro" id="IPR027417">
    <property type="entry name" value="P-loop_NTPase"/>
</dbReference>
<dbReference type="InterPro" id="IPR005225">
    <property type="entry name" value="Small_GTP-bd"/>
</dbReference>
<dbReference type="InterPro" id="IPR001806">
    <property type="entry name" value="Small_GTPase"/>
</dbReference>
<dbReference type="InterPro" id="IPR003578">
    <property type="entry name" value="Small_GTPase_Rho"/>
</dbReference>
<dbReference type="NCBIfam" id="TIGR00231">
    <property type="entry name" value="small_GTP"/>
    <property type="match status" value="1"/>
</dbReference>
<dbReference type="PANTHER" id="PTHR24072">
    <property type="entry name" value="RHO FAMILY GTPASE"/>
    <property type="match status" value="1"/>
</dbReference>
<dbReference type="Pfam" id="PF00071">
    <property type="entry name" value="Ras"/>
    <property type="match status" value="1"/>
</dbReference>
<dbReference type="PRINTS" id="PR00449">
    <property type="entry name" value="RASTRNSFRMNG"/>
</dbReference>
<dbReference type="SMART" id="SM00175">
    <property type="entry name" value="RAB"/>
    <property type="match status" value="1"/>
</dbReference>
<dbReference type="SMART" id="SM00173">
    <property type="entry name" value="RAS"/>
    <property type="match status" value="1"/>
</dbReference>
<dbReference type="SMART" id="SM00174">
    <property type="entry name" value="RHO"/>
    <property type="match status" value="1"/>
</dbReference>
<dbReference type="SUPFAM" id="SSF52540">
    <property type="entry name" value="P-loop containing nucleoside triphosphate hydrolases"/>
    <property type="match status" value="1"/>
</dbReference>
<dbReference type="PROSITE" id="PS51420">
    <property type="entry name" value="RHO"/>
    <property type="match status" value="1"/>
</dbReference>
<comment type="function">
    <text>During gonad morphogenesis, plays a role in distal tip cell (DTC)-mediated guidance of gonad elongation (PubMed:19023419).</text>
</comment>
<comment type="subcellular location">
    <subcellularLocation>
        <location evidence="5">Cell membrane</location>
        <topology evidence="5">Lipid-anchor</topology>
        <orientation evidence="5">Cytoplasmic side</orientation>
    </subcellularLocation>
</comment>
<comment type="disruption phenotype">
    <text evidence="4">RNAi-mediated knockdown causes distal tip cells (DTC) to make extra turns in approximately 20 percent of animals during the last phase of gonad morphogenesis.</text>
</comment>
<comment type="similarity">
    <text evidence="5">Belongs to the small GTPase superfamily. Rho family.</text>
</comment>
<reference key="1">
    <citation type="journal article" date="1996" name="Gene">
        <title>Isolation of the gene coding for Caenorhabditis elegans Rac2 homologue, a Ras-related small GTP-binding protein.</title>
        <authorList>
            <person name="Chen W."/>
            <person name="Yap S.F."/>
            <person name="Lim L."/>
        </authorList>
    </citation>
    <scope>NUCLEOTIDE SEQUENCE [GENOMIC DNA]</scope>
</reference>
<reference key="2">
    <citation type="journal article" date="1998" name="Science">
        <title>Genome sequence of the nematode C. elegans: a platform for investigating biology.</title>
        <authorList>
            <consortium name="The C. elegans sequencing consortium"/>
        </authorList>
    </citation>
    <scope>NUCLEOTIDE SEQUENCE [LARGE SCALE GENOMIC DNA]</scope>
    <source>
        <strain>Bristol N2</strain>
    </source>
</reference>
<reference key="3">
    <citation type="journal article" date="2008" name="PLoS Genet.">
        <title>A RAC/CDC-42-independent GIT/PIX/PAK signaling pathway mediates cell migration in C. elegans.</title>
        <authorList>
            <person name="Lucanic M."/>
            <person name="Cheng H.J."/>
        </authorList>
    </citation>
    <scope>FUNCTION</scope>
    <scope>DISRUPTION PHENOTYPE</scope>
</reference>
<name>RAC2_CAEEL</name>
<accession>Q94124</accession>
<accession>O45648</accession>
<accession>Q95QD0</accession>
<keyword id="KW-1003">Cell membrane</keyword>
<keyword id="KW-0342">GTP-binding</keyword>
<keyword id="KW-0449">Lipoprotein</keyword>
<keyword id="KW-0472">Membrane</keyword>
<keyword id="KW-0488">Methylation</keyword>
<keyword id="KW-0547">Nucleotide-binding</keyword>
<keyword id="KW-0636">Prenylation</keyword>
<keyword id="KW-1185">Reference proteome</keyword>
<feature type="chain" id="PRO_0000198892" description="Ras-related protein rac-2">
    <location>
        <begin position="1"/>
        <end position="192"/>
    </location>
</feature>
<feature type="propeptide" id="PRO_0000281243" description="Removed in mature form" evidence="1">
    <location>
        <begin position="193"/>
        <end position="195"/>
    </location>
</feature>
<feature type="region of interest" description="Disordered" evidence="3">
    <location>
        <begin position="176"/>
        <end position="195"/>
    </location>
</feature>
<feature type="short sequence motif" description="Effector region" evidence="2">
    <location>
        <begin position="32"/>
        <end position="40"/>
    </location>
</feature>
<feature type="binding site" evidence="1">
    <location>
        <begin position="10"/>
        <end position="17"/>
    </location>
    <ligand>
        <name>GTP</name>
        <dbReference type="ChEBI" id="CHEBI:37565"/>
    </ligand>
</feature>
<feature type="binding site" evidence="1">
    <location>
        <begin position="57"/>
        <end position="61"/>
    </location>
    <ligand>
        <name>GTP</name>
        <dbReference type="ChEBI" id="CHEBI:37565"/>
    </ligand>
</feature>
<feature type="binding site" evidence="1">
    <location>
        <begin position="115"/>
        <end position="118"/>
    </location>
    <ligand>
        <name>GTP</name>
        <dbReference type="ChEBI" id="CHEBI:37565"/>
    </ligand>
</feature>
<feature type="modified residue" description="Cysteine methyl ester" evidence="1">
    <location>
        <position position="192"/>
    </location>
</feature>
<feature type="lipid moiety-binding region" description="S-geranylgeranyl cysteine" evidence="1">
    <location>
        <position position="192"/>
    </location>
</feature>
<protein>
    <recommendedName>
        <fullName>Ras-related protein rac-2</fullName>
    </recommendedName>
</protein>
<sequence>MQAIKCVVVGDGAVGKTCLLLSYTTNAFPGEYILTVFDTYSTNVMVDGRPINLSLWDTAGQDDYDQFRHLSFPQTDVFLVCFALNNPASFENVRAKWYPEVSHHCPNTPIILVGTKADLREDRDTIERLRERRLQPVSHTQGYVMAKEIKAVKYLECSALTQIGLKQVFDEAIRTGLTPPQTPQTRAKKSNCTVL</sequence>